<sequence>GWASKIAQTLGKMAKVGLQELIQPK</sequence>
<name>XPFR3_XENRU</name>
<feature type="peptide" id="PRO_0000440934" description="Xenoposin precursor fragment R3" evidence="2">
    <location>
        <begin position="1"/>
        <end position="25"/>
    </location>
</feature>
<accession>C0HKP7</accession>
<reference evidence="4" key="1">
    <citation type="journal article" date="2016" name="Comp. Biochem. Physiol.">
        <title>Peptidomic analysis of the extensive array of host-defense peptides in skin secretions of the dodecaploid frog Xenopus ruwenzoriensis (Pipidae).</title>
        <authorList>
            <person name="Coquet L."/>
            <person name="Kolodziejek J."/>
            <person name="Jouenne T."/>
            <person name="Nowotny N."/>
            <person name="King J.D."/>
            <person name="Conlon J.M."/>
        </authorList>
    </citation>
    <scope>PROTEIN SEQUENCE</scope>
    <scope>SUBCELLULAR LOCATION</scope>
    <scope>MASS SPECTROMETRY</scope>
    <source>
        <tissue evidence="3">Skin secretion</tissue>
    </source>
</reference>
<protein>
    <recommendedName>
        <fullName evidence="3">Xenoposin precursor fragment R3</fullName>
    </recommendedName>
    <alternativeName>
        <fullName evidence="3">XPF-R3</fullName>
    </alternativeName>
</protein>
<keyword id="KW-0878">Amphibian defense peptide</keyword>
<keyword id="KW-0929">Antimicrobial</keyword>
<keyword id="KW-0903">Direct protein sequencing</keyword>
<keyword id="KW-0964">Secreted</keyword>
<comment type="function">
    <text evidence="1">Antimicrobial peptide.</text>
</comment>
<comment type="subcellular location">
    <subcellularLocation>
        <location evidence="2">Secreted</location>
    </subcellularLocation>
</comment>
<comment type="tissue specificity">
    <text evidence="5">Expressed by the skin glands.</text>
</comment>
<comment type="mass spectrometry"/>
<comment type="similarity">
    <text evidence="4">Belongs to the gastrin/cholecystokinin family. Magainin subfamily.</text>
</comment>
<dbReference type="GO" id="GO:0005576">
    <property type="term" value="C:extracellular region"/>
    <property type="evidence" value="ECO:0007669"/>
    <property type="project" value="UniProtKB-SubCell"/>
</dbReference>
<dbReference type="GO" id="GO:0006952">
    <property type="term" value="P:defense response"/>
    <property type="evidence" value="ECO:0007669"/>
    <property type="project" value="UniProtKB-KW"/>
</dbReference>
<organism evidence="3">
    <name type="scientific">Xenopus ruwenzoriensis</name>
    <name type="common">Uganda clawed frog</name>
    <dbReference type="NCBI Taxonomy" id="105430"/>
    <lineage>
        <taxon>Eukaryota</taxon>
        <taxon>Metazoa</taxon>
        <taxon>Chordata</taxon>
        <taxon>Craniata</taxon>
        <taxon>Vertebrata</taxon>
        <taxon>Euteleostomi</taxon>
        <taxon>Amphibia</taxon>
        <taxon>Batrachia</taxon>
        <taxon>Anura</taxon>
        <taxon>Pipoidea</taxon>
        <taxon>Pipidae</taxon>
        <taxon>Xenopodinae</taxon>
        <taxon>Xenopus</taxon>
        <taxon>Xenopus</taxon>
    </lineage>
</organism>
<proteinExistence type="evidence at protein level"/>
<evidence type="ECO:0000250" key="1">
    <source>
        <dbReference type="UniProtKB" id="C0HK86"/>
    </source>
</evidence>
<evidence type="ECO:0000269" key="2">
    <source>
    </source>
</evidence>
<evidence type="ECO:0000303" key="3">
    <source>
    </source>
</evidence>
<evidence type="ECO:0000305" key="4"/>
<evidence type="ECO:0000305" key="5">
    <source>
    </source>
</evidence>